<sequence length="350" mass="38057">MAAENERKSPSAVSDMGAWAMNVISSVGIIMANKQLMSSSGFAFSFATTLTGFHFALTALVGMVSNATGFSASKHVPMWELIWFSIVANVSIAAMNFSLMLNSVGFYQISKLSMIPVVCVMEWILHSKRYSREVKISVVVVVVGVGICTVTDVKVNAKGFICACVAIFSSSLQQILIGSLQKKYSIGSFELLSKTAPIQAFSLLVVGPLVDYLLSGKFIMKYNMSSGCFLFILLSCGLAVFCNISQYLCIGRFSAVSFQVIGHMKTVCILTLGWLLFDSAMTFKNVAGMIVAIVGMVIYSWAMELEKQSIIAAKALNSVKHSLTEEEFELLKEGVETTQSKDVELGRTKD</sequence>
<protein>
    <recommendedName>
        <fullName evidence="7">UDP-rhamnose/UDP-galactose transporter 3</fullName>
        <shortName evidence="3">UDP-Rha/UDP-Gal transporter 3</shortName>
    </recommendedName>
    <alternativeName>
        <fullName evidence="6">Bi-functional UDP-rhamnose/UDP-galactose transporter</fullName>
    </alternativeName>
</protein>
<accession>Q9FIH5</accession>
<comment type="function">
    <text evidence="2">Nucleotide-sugar transporter that transports UDP-rhamnose or UDP-galactose and UMP in a strict counter-exchange mode.</text>
</comment>
<comment type="biophysicochemical properties">
    <kinetics>
        <KM evidence="2">40 uM for UDP-Rhamnose</KM>
        <KM evidence="2">149 uM for UDP-Galactose</KM>
        <Vmax evidence="2">32.0 nmol/sec/mg enzyme toward UDP-Rhamnose</Vmax>
        <Vmax evidence="2">24.0 nmol/sec/mg enzyme toward UDP-Galactose</Vmax>
    </kinetics>
</comment>
<comment type="subcellular location">
    <subcellularLocation>
        <location evidence="2">Golgi apparatus membrane</location>
        <topology evidence="1">Multi-pass membrane protein</topology>
    </subcellularLocation>
</comment>
<comment type="alternative products">
    <event type="alternative splicing"/>
    <isoform>
        <id>Q9FIH5-1</id>
        <name>1</name>
        <sequence type="displayed"/>
    </isoform>
    <text>A number of isoforms are produced. According to EST sequences.</text>
</comment>
<comment type="similarity">
    <text evidence="4">Belongs to the TPT transporter family. TPT (TC 2.A.7.9) subfamily.</text>
</comment>
<gene>
    <name evidence="6 7" type="primary">URGT3</name>
    <name evidence="5" type="ordered locus">At5g42420</name>
    <name evidence="8" type="ORF">MDH9.11</name>
</gene>
<organism>
    <name type="scientific">Arabidopsis thaliana</name>
    <name type="common">Mouse-ear cress</name>
    <dbReference type="NCBI Taxonomy" id="3702"/>
    <lineage>
        <taxon>Eukaryota</taxon>
        <taxon>Viridiplantae</taxon>
        <taxon>Streptophyta</taxon>
        <taxon>Embryophyta</taxon>
        <taxon>Tracheophyta</taxon>
        <taxon>Spermatophyta</taxon>
        <taxon>Magnoliopsida</taxon>
        <taxon>eudicotyledons</taxon>
        <taxon>Gunneridae</taxon>
        <taxon>Pentapetalae</taxon>
        <taxon>rosids</taxon>
        <taxon>malvids</taxon>
        <taxon>Brassicales</taxon>
        <taxon>Brassicaceae</taxon>
        <taxon>Camelineae</taxon>
        <taxon>Arabidopsis</taxon>
    </lineage>
</organism>
<reference key="1">
    <citation type="journal article" date="2014" name="Proc. Natl. Acad. Sci. U.S.A.">
        <title>The Golgi localized bifunctional UDP-rhamnose/UDP-galactose transporter family of Arabidopsis.</title>
        <authorList>
            <person name="Rautengarten C."/>
            <person name="Ebert B."/>
            <person name="Moreno I."/>
            <person name="Temple H."/>
            <person name="Herter T."/>
            <person name="Link B."/>
            <person name="Donas-Cofre D."/>
            <person name="Moreno A."/>
            <person name="Saez-Aguayo S."/>
            <person name="Blanco F."/>
            <person name="Mortimer J.C."/>
            <person name="Schultink A."/>
            <person name="Reiter W.D."/>
            <person name="Dupree P."/>
            <person name="Pauly M."/>
            <person name="Heazlewood J.L."/>
            <person name="Scheller H.V."/>
            <person name="Orellana A."/>
        </authorList>
    </citation>
    <scope>NUCLEOTIDE SEQUENCE [MRNA]</scope>
    <scope>GENE FAMILY</scope>
    <scope>NOMENCLATURE</scope>
    <scope>SUBCELLULAR LOCATION</scope>
    <scope>FUNCTION</scope>
    <scope>BIOPHYSICOCHEMICAL PROPERTIES</scope>
    <source>
        <strain>cv. Columbia</strain>
    </source>
</reference>
<reference key="2">
    <citation type="journal article" date="1998" name="DNA Res.">
        <title>Structural analysis of Arabidopsis thaliana chromosome 5. VIII. Sequence features of the regions of 1,081,958 bp covered by seventeen physically assigned P1 and TAC clones.</title>
        <authorList>
            <person name="Asamizu E."/>
            <person name="Sato S."/>
            <person name="Kaneko T."/>
            <person name="Nakamura Y."/>
            <person name="Kotani H."/>
            <person name="Miyajima N."/>
            <person name="Tabata S."/>
        </authorList>
    </citation>
    <scope>NUCLEOTIDE SEQUENCE [LARGE SCALE GENOMIC DNA]</scope>
    <source>
        <strain>cv. Columbia</strain>
    </source>
</reference>
<reference key="3">
    <citation type="journal article" date="2017" name="Plant J.">
        <title>Araport11: a complete reannotation of the Arabidopsis thaliana reference genome.</title>
        <authorList>
            <person name="Cheng C.Y."/>
            <person name="Krishnakumar V."/>
            <person name="Chan A.P."/>
            <person name="Thibaud-Nissen F."/>
            <person name="Schobel S."/>
            <person name="Town C.D."/>
        </authorList>
    </citation>
    <scope>GENOME REANNOTATION</scope>
    <source>
        <strain>cv. Columbia</strain>
    </source>
</reference>
<reference key="4">
    <citation type="submission" date="2006-04" db="EMBL/GenBank/DDBJ databases">
        <title>Arabidopsis ORF clones.</title>
        <authorList>
            <person name="Shinn P."/>
            <person name="Chen H."/>
            <person name="Kim C.J."/>
            <person name="Ecker J.R."/>
        </authorList>
    </citation>
    <scope>NUCLEOTIDE SEQUENCE [LARGE SCALE MRNA]</scope>
    <source>
        <strain>cv. Columbia</strain>
    </source>
</reference>
<reference key="5">
    <citation type="submission" date="2006-07" db="EMBL/GenBank/DDBJ databases">
        <title>Large-scale analysis of RIKEN Arabidopsis full-length (RAFL) cDNAs.</title>
        <authorList>
            <person name="Totoki Y."/>
            <person name="Seki M."/>
            <person name="Ishida J."/>
            <person name="Nakajima M."/>
            <person name="Enju A."/>
            <person name="Kamiya A."/>
            <person name="Narusaka M."/>
            <person name="Shin-i T."/>
            <person name="Nakagawa M."/>
            <person name="Sakamoto N."/>
            <person name="Oishi K."/>
            <person name="Kohara Y."/>
            <person name="Kobayashi M."/>
            <person name="Toyoda A."/>
            <person name="Sakaki Y."/>
            <person name="Sakurai T."/>
            <person name="Iida K."/>
            <person name="Akiyama K."/>
            <person name="Satou M."/>
            <person name="Toyoda T."/>
            <person name="Konagaya A."/>
            <person name="Carninci P."/>
            <person name="Kawai J."/>
            <person name="Hayashizaki Y."/>
            <person name="Shinozaki K."/>
        </authorList>
    </citation>
    <scope>NUCLEOTIDE SEQUENCE [LARGE SCALE MRNA]</scope>
    <source>
        <strain>cv. Columbia</strain>
    </source>
</reference>
<reference key="6">
    <citation type="journal article" date="2015" name="Plant Cell">
        <title>Identification and characterization of a Golgi-localized UDP-xylose transporter family from Arabidopsis.</title>
        <authorList>
            <person name="Ebert B."/>
            <person name="Rautengarten C."/>
            <person name="Guo X."/>
            <person name="Xiong G."/>
            <person name="Stonebloom S."/>
            <person name="Smith-Moritz A.M."/>
            <person name="Herter T."/>
            <person name="Chan L.J."/>
            <person name="Adams P.D."/>
            <person name="Petzold C.J."/>
            <person name="Pauly M."/>
            <person name="Willats W.G."/>
            <person name="Heazlewood J.L."/>
            <person name="Scheller H.V."/>
        </authorList>
    </citation>
    <scope>GENE FAMILY</scope>
</reference>
<feature type="chain" id="PRO_0000439521" description="UDP-rhamnose/UDP-galactose transporter 3">
    <location>
        <begin position="1"/>
        <end position="350"/>
    </location>
</feature>
<feature type="transmembrane region" description="Helical" evidence="1">
    <location>
        <begin position="12"/>
        <end position="32"/>
    </location>
</feature>
<feature type="transmembrane region" description="Helical" evidence="1">
    <location>
        <begin position="41"/>
        <end position="61"/>
    </location>
</feature>
<feature type="transmembrane region" description="Helical" evidence="1">
    <location>
        <begin position="81"/>
        <end position="101"/>
    </location>
</feature>
<feature type="transmembrane region" description="Helical" evidence="1">
    <location>
        <begin position="104"/>
        <end position="124"/>
    </location>
</feature>
<feature type="transmembrane region" description="Helical" evidence="1">
    <location>
        <begin position="133"/>
        <end position="153"/>
    </location>
</feature>
<feature type="transmembrane region" description="Helical" evidence="1">
    <location>
        <begin position="160"/>
        <end position="180"/>
    </location>
</feature>
<feature type="transmembrane region" description="Helical" evidence="1">
    <location>
        <begin position="200"/>
        <end position="220"/>
    </location>
</feature>
<feature type="transmembrane region" description="Helical" evidence="1">
    <location>
        <begin position="224"/>
        <end position="244"/>
    </location>
</feature>
<feature type="transmembrane region" description="Helical" evidence="1">
    <location>
        <begin position="257"/>
        <end position="277"/>
    </location>
</feature>
<feature type="transmembrane region" description="Helical" evidence="1">
    <location>
        <begin position="286"/>
        <end position="306"/>
    </location>
</feature>
<proteinExistence type="evidence at protein level"/>
<name>URGT3_ARATH</name>
<evidence type="ECO:0000255" key="1"/>
<evidence type="ECO:0000269" key="2">
    <source>
    </source>
</evidence>
<evidence type="ECO:0000303" key="3">
    <source>
    </source>
</evidence>
<evidence type="ECO:0000305" key="4"/>
<evidence type="ECO:0000312" key="5">
    <source>
        <dbReference type="Araport" id="AT5G42420"/>
    </source>
</evidence>
<evidence type="ECO:0000312" key="6">
    <source>
        <dbReference type="EMBL" id="AIJ01997.1"/>
    </source>
</evidence>
<evidence type="ECO:0000312" key="7">
    <source>
        <dbReference type="EMBL" id="AKA88216.1"/>
    </source>
</evidence>
<evidence type="ECO:0000312" key="8">
    <source>
        <dbReference type="EMBL" id="BAB10483.1"/>
    </source>
</evidence>
<keyword id="KW-0025">Alternative splicing</keyword>
<keyword id="KW-0050">Antiport</keyword>
<keyword id="KW-0333">Golgi apparatus</keyword>
<keyword id="KW-0472">Membrane</keyword>
<keyword id="KW-1185">Reference proteome</keyword>
<keyword id="KW-0762">Sugar transport</keyword>
<keyword id="KW-0812">Transmembrane</keyword>
<keyword id="KW-1133">Transmembrane helix</keyword>
<keyword id="KW-0813">Transport</keyword>
<dbReference type="EMBL" id="KJ667159">
    <property type="protein sequence ID" value="AIJ01997.1"/>
    <property type="molecule type" value="mRNA"/>
</dbReference>
<dbReference type="EMBL" id="KP872770">
    <property type="protein sequence ID" value="AKA88216.1"/>
    <property type="molecule type" value="mRNA"/>
</dbReference>
<dbReference type="EMBL" id="AB016888">
    <property type="protein sequence ID" value="BAB10483.1"/>
    <property type="molecule type" value="Genomic_DNA"/>
</dbReference>
<dbReference type="EMBL" id="CP002688">
    <property type="protein sequence ID" value="AED94808.1"/>
    <property type="molecule type" value="Genomic_DNA"/>
</dbReference>
<dbReference type="EMBL" id="BT025259">
    <property type="protein sequence ID" value="ABF19012.1"/>
    <property type="molecule type" value="mRNA"/>
</dbReference>
<dbReference type="EMBL" id="AK228744">
    <property type="protein sequence ID" value="BAF00644.1"/>
    <property type="molecule type" value="mRNA"/>
</dbReference>
<dbReference type="RefSeq" id="NP_199057.1">
    <molecule id="Q9FIH5-1"/>
    <property type="nucleotide sequence ID" value="NM_123607.5"/>
</dbReference>
<dbReference type="SMR" id="Q9FIH5"/>
<dbReference type="FunCoup" id="Q9FIH5">
    <property type="interactions" value="2257"/>
</dbReference>
<dbReference type="IntAct" id="Q9FIH5">
    <property type="interactions" value="14"/>
</dbReference>
<dbReference type="STRING" id="3702.Q9FIH5"/>
<dbReference type="PaxDb" id="3702-AT5G42420.1"/>
<dbReference type="EnsemblPlants" id="AT5G42420.1">
    <molecule id="Q9FIH5-1"/>
    <property type="protein sequence ID" value="AT5G42420.1"/>
    <property type="gene ID" value="AT5G42420"/>
</dbReference>
<dbReference type="GeneID" id="834248"/>
<dbReference type="Gramene" id="AT5G42420.1">
    <molecule id="Q9FIH5-1"/>
    <property type="protein sequence ID" value="AT5G42420.1"/>
    <property type="gene ID" value="AT5G42420"/>
</dbReference>
<dbReference type="KEGG" id="ath:AT5G42420"/>
<dbReference type="Araport" id="AT5G42420"/>
<dbReference type="TAIR" id="AT5G42420">
    <property type="gene designation" value="URGT3"/>
</dbReference>
<dbReference type="eggNOG" id="KOG1441">
    <property type="taxonomic scope" value="Eukaryota"/>
</dbReference>
<dbReference type="HOGENOM" id="CLU_048347_0_1_1"/>
<dbReference type="InParanoid" id="Q9FIH5"/>
<dbReference type="OMA" id="YTMSSGC"/>
<dbReference type="OrthoDB" id="5547497at2759"/>
<dbReference type="PhylomeDB" id="Q9FIH5"/>
<dbReference type="PRO" id="PR:Q9FIH5"/>
<dbReference type="Proteomes" id="UP000006548">
    <property type="component" value="Chromosome 5"/>
</dbReference>
<dbReference type="ExpressionAtlas" id="Q9FIH5">
    <property type="expression patterns" value="baseline and differential"/>
</dbReference>
<dbReference type="GO" id="GO:0005794">
    <property type="term" value="C:Golgi apparatus"/>
    <property type="evidence" value="ECO:0000314"/>
    <property type="project" value="TAIR"/>
</dbReference>
<dbReference type="GO" id="GO:0000139">
    <property type="term" value="C:Golgi membrane"/>
    <property type="evidence" value="ECO:0007669"/>
    <property type="project" value="UniProtKB-SubCell"/>
</dbReference>
<dbReference type="GO" id="GO:0015297">
    <property type="term" value="F:antiporter activity"/>
    <property type="evidence" value="ECO:0000314"/>
    <property type="project" value="UniProtKB"/>
</dbReference>
<dbReference type="GO" id="GO:0022857">
    <property type="term" value="F:transmembrane transporter activity"/>
    <property type="evidence" value="ECO:0000314"/>
    <property type="project" value="TAIR"/>
</dbReference>
<dbReference type="InterPro" id="IPR004853">
    <property type="entry name" value="Sugar_P_trans_dom"/>
</dbReference>
<dbReference type="InterPro" id="IPR050186">
    <property type="entry name" value="TPT_transporter"/>
</dbReference>
<dbReference type="PANTHER" id="PTHR11132">
    <property type="entry name" value="SOLUTE CARRIER FAMILY 35"/>
    <property type="match status" value="1"/>
</dbReference>
<dbReference type="Pfam" id="PF03151">
    <property type="entry name" value="TPT"/>
    <property type="match status" value="1"/>
</dbReference>
<dbReference type="SUPFAM" id="SSF103481">
    <property type="entry name" value="Multidrug resistance efflux transporter EmrE"/>
    <property type="match status" value="1"/>
</dbReference>